<proteinExistence type="evidence at transcript level"/>
<dbReference type="EC" id="2.7.10.2"/>
<dbReference type="EMBL" id="X67786">
    <property type="protein sequence ID" value="CAA47996.1"/>
    <property type="molecule type" value="mRNA"/>
</dbReference>
<dbReference type="PIR" id="S33569">
    <property type="entry name" value="S33569"/>
</dbReference>
<dbReference type="RefSeq" id="NP_001103257.1">
    <property type="nucleotide sequence ID" value="NM_001109787.1"/>
</dbReference>
<dbReference type="SMR" id="Q02977"/>
<dbReference type="FunCoup" id="Q02977">
    <property type="interactions" value="5"/>
</dbReference>
<dbReference type="STRING" id="9031.ENSGALP00000043829"/>
<dbReference type="PaxDb" id="9031-ENSGALP00000007628"/>
<dbReference type="Ensembl" id="ENSGALT00010040679.1">
    <property type="protein sequence ID" value="ENSGALP00010023644.1"/>
    <property type="gene ID" value="ENSGALG00010016861.1"/>
</dbReference>
<dbReference type="GeneID" id="777583"/>
<dbReference type="KEGG" id="gga:777583"/>
<dbReference type="CTD" id="2268"/>
<dbReference type="VEuPathDB" id="HostDB:geneid_777583"/>
<dbReference type="eggNOG" id="KOG0197">
    <property type="taxonomic scope" value="Eukaryota"/>
</dbReference>
<dbReference type="GeneTree" id="ENSGT00940000157554"/>
<dbReference type="InParanoid" id="Q02977"/>
<dbReference type="OMA" id="YDYTERT"/>
<dbReference type="OrthoDB" id="4062651at2759"/>
<dbReference type="PhylomeDB" id="Q02977"/>
<dbReference type="BRENDA" id="2.7.10.2">
    <property type="organism ID" value="1306"/>
</dbReference>
<dbReference type="Reactome" id="R-GGA-2029481">
    <property type="pathway name" value="FCGR activation"/>
</dbReference>
<dbReference type="Reactome" id="R-GGA-432142">
    <property type="pathway name" value="Platelet sensitization by LDL"/>
</dbReference>
<dbReference type="Reactome" id="R-GGA-6798695">
    <property type="pathway name" value="Neutrophil degranulation"/>
</dbReference>
<dbReference type="PRO" id="PR:Q02977"/>
<dbReference type="Proteomes" id="UP000000539">
    <property type="component" value="Chromosome 23"/>
</dbReference>
<dbReference type="Bgee" id="ENSGALG00000032199">
    <property type="expression patterns" value="Expressed in lung and 11 other cell types or tissues"/>
</dbReference>
<dbReference type="GO" id="GO:0015629">
    <property type="term" value="C:actin cytoskeleton"/>
    <property type="evidence" value="ECO:0007669"/>
    <property type="project" value="Ensembl"/>
</dbReference>
<dbReference type="GO" id="GO:0016235">
    <property type="term" value="C:aggresome"/>
    <property type="evidence" value="ECO:0007669"/>
    <property type="project" value="Ensembl"/>
</dbReference>
<dbReference type="GO" id="GO:0005886">
    <property type="term" value="C:plasma membrane"/>
    <property type="evidence" value="ECO:0000318"/>
    <property type="project" value="GO_Central"/>
</dbReference>
<dbReference type="GO" id="GO:0032587">
    <property type="term" value="C:ruffle membrane"/>
    <property type="evidence" value="ECO:0007669"/>
    <property type="project" value="Ensembl"/>
</dbReference>
<dbReference type="GO" id="GO:0005524">
    <property type="term" value="F:ATP binding"/>
    <property type="evidence" value="ECO:0007669"/>
    <property type="project" value="UniProtKB-KW"/>
</dbReference>
<dbReference type="GO" id="GO:0034988">
    <property type="term" value="F:Fc-gamma receptor I complex binding"/>
    <property type="evidence" value="ECO:0007669"/>
    <property type="project" value="Ensembl"/>
</dbReference>
<dbReference type="GO" id="GO:0004715">
    <property type="term" value="F:non-membrane spanning protein tyrosine kinase activity"/>
    <property type="evidence" value="ECO:0000318"/>
    <property type="project" value="GO_Central"/>
</dbReference>
<dbReference type="GO" id="GO:0001784">
    <property type="term" value="F:phosphotyrosine residue binding"/>
    <property type="evidence" value="ECO:0007669"/>
    <property type="project" value="Ensembl"/>
</dbReference>
<dbReference type="GO" id="GO:0019901">
    <property type="term" value="F:protein kinase binding"/>
    <property type="evidence" value="ECO:0007669"/>
    <property type="project" value="Ensembl"/>
</dbReference>
<dbReference type="GO" id="GO:0005102">
    <property type="term" value="F:signaling receptor binding"/>
    <property type="evidence" value="ECO:0000318"/>
    <property type="project" value="GO_Central"/>
</dbReference>
<dbReference type="GO" id="GO:0030282">
    <property type="term" value="P:bone mineralization"/>
    <property type="evidence" value="ECO:0007669"/>
    <property type="project" value="Ensembl"/>
</dbReference>
<dbReference type="GO" id="GO:0030154">
    <property type="term" value="P:cell differentiation"/>
    <property type="evidence" value="ECO:0000318"/>
    <property type="project" value="GO_Central"/>
</dbReference>
<dbReference type="GO" id="GO:0007169">
    <property type="term" value="P:cell surface receptor protein tyrosine kinase signaling pathway"/>
    <property type="evidence" value="ECO:0000318"/>
    <property type="project" value="GO_Central"/>
</dbReference>
<dbReference type="GO" id="GO:0050830">
    <property type="term" value="P:defense response to Gram-positive bacterium"/>
    <property type="evidence" value="ECO:0007669"/>
    <property type="project" value="Ensembl"/>
</dbReference>
<dbReference type="GO" id="GO:0007229">
    <property type="term" value="P:integrin-mediated signaling pathway"/>
    <property type="evidence" value="ECO:0000318"/>
    <property type="project" value="GO_Central"/>
</dbReference>
<dbReference type="GO" id="GO:0032815">
    <property type="term" value="P:negative regulation of natural killer cell activation"/>
    <property type="evidence" value="ECO:0007669"/>
    <property type="project" value="Ensembl"/>
</dbReference>
<dbReference type="GO" id="GO:0030335">
    <property type="term" value="P:positive regulation of cell migration"/>
    <property type="evidence" value="ECO:0007669"/>
    <property type="project" value="Ensembl"/>
</dbReference>
<dbReference type="GO" id="GO:0001819">
    <property type="term" value="P:positive regulation of cytokine production"/>
    <property type="evidence" value="ECO:0007669"/>
    <property type="project" value="Ensembl"/>
</dbReference>
<dbReference type="GO" id="GO:0043306">
    <property type="term" value="P:positive regulation of mast cell degranulation"/>
    <property type="evidence" value="ECO:0007669"/>
    <property type="project" value="Ensembl"/>
</dbReference>
<dbReference type="GO" id="GO:0051897">
    <property type="term" value="P:positive regulation of phosphatidylinositol 3-kinase/protein kinase B signal transduction"/>
    <property type="evidence" value="ECO:0007669"/>
    <property type="project" value="Ensembl"/>
</dbReference>
<dbReference type="GO" id="GO:0008360">
    <property type="term" value="P:regulation of cell shape"/>
    <property type="evidence" value="ECO:0007669"/>
    <property type="project" value="Ensembl"/>
</dbReference>
<dbReference type="GO" id="GO:0045088">
    <property type="term" value="P:regulation of innate immune response"/>
    <property type="evidence" value="ECO:0007669"/>
    <property type="project" value="Ensembl"/>
</dbReference>
<dbReference type="GO" id="GO:0050764">
    <property type="term" value="P:regulation of phagocytosis"/>
    <property type="evidence" value="ECO:0007669"/>
    <property type="project" value="Ensembl"/>
</dbReference>
<dbReference type="GO" id="GO:0048705">
    <property type="term" value="P:skeletal system morphogenesis"/>
    <property type="evidence" value="ECO:0007669"/>
    <property type="project" value="Ensembl"/>
</dbReference>
<dbReference type="CDD" id="cd14203">
    <property type="entry name" value="PTKc_Src_Fyn_like"/>
    <property type="match status" value="1"/>
</dbReference>
<dbReference type="CDD" id="cd10418">
    <property type="entry name" value="SH2_Src_Fyn_isoform_a_like"/>
    <property type="match status" value="1"/>
</dbReference>
<dbReference type="CDD" id="cd12006">
    <property type="entry name" value="SH3_Fyn_Yrk"/>
    <property type="match status" value="1"/>
</dbReference>
<dbReference type="FunFam" id="1.10.510.10:FF:000553">
    <property type="entry name" value="Tyrosine-protein kinase"/>
    <property type="match status" value="1"/>
</dbReference>
<dbReference type="FunFam" id="2.30.30.40:FF:000022">
    <property type="entry name" value="Tyrosine-protein kinase"/>
    <property type="match status" value="1"/>
</dbReference>
<dbReference type="FunFam" id="3.30.200.20:FF:000016">
    <property type="entry name" value="Tyrosine-protein kinase"/>
    <property type="match status" value="1"/>
</dbReference>
<dbReference type="FunFam" id="3.30.505.10:FF:000001">
    <property type="entry name" value="Tyrosine-protein kinase"/>
    <property type="match status" value="1"/>
</dbReference>
<dbReference type="Gene3D" id="3.30.200.20">
    <property type="entry name" value="Phosphorylase Kinase, domain 1"/>
    <property type="match status" value="1"/>
</dbReference>
<dbReference type="Gene3D" id="3.30.505.10">
    <property type="entry name" value="SH2 domain"/>
    <property type="match status" value="1"/>
</dbReference>
<dbReference type="Gene3D" id="2.30.30.40">
    <property type="entry name" value="SH3 Domains"/>
    <property type="match status" value="1"/>
</dbReference>
<dbReference type="Gene3D" id="1.10.510.10">
    <property type="entry name" value="Transferase(Phosphotransferase) domain 1"/>
    <property type="match status" value="1"/>
</dbReference>
<dbReference type="InterPro" id="IPR047924">
    <property type="entry name" value="Fyn/Yrk_SH2"/>
</dbReference>
<dbReference type="InterPro" id="IPR035750">
    <property type="entry name" value="Fyn/Yrk_SH3"/>
</dbReference>
<dbReference type="InterPro" id="IPR011009">
    <property type="entry name" value="Kinase-like_dom_sf"/>
</dbReference>
<dbReference type="InterPro" id="IPR050198">
    <property type="entry name" value="Non-receptor_tyrosine_kinases"/>
</dbReference>
<dbReference type="InterPro" id="IPR000719">
    <property type="entry name" value="Prot_kinase_dom"/>
</dbReference>
<dbReference type="InterPro" id="IPR017441">
    <property type="entry name" value="Protein_kinase_ATP_BS"/>
</dbReference>
<dbReference type="InterPro" id="IPR001245">
    <property type="entry name" value="Ser-Thr/Tyr_kinase_cat_dom"/>
</dbReference>
<dbReference type="InterPro" id="IPR000980">
    <property type="entry name" value="SH2"/>
</dbReference>
<dbReference type="InterPro" id="IPR036860">
    <property type="entry name" value="SH2_dom_sf"/>
</dbReference>
<dbReference type="InterPro" id="IPR036028">
    <property type="entry name" value="SH3-like_dom_sf"/>
</dbReference>
<dbReference type="InterPro" id="IPR001452">
    <property type="entry name" value="SH3_domain"/>
</dbReference>
<dbReference type="InterPro" id="IPR008266">
    <property type="entry name" value="Tyr_kinase_AS"/>
</dbReference>
<dbReference type="InterPro" id="IPR020635">
    <property type="entry name" value="Tyr_kinase_cat_dom"/>
</dbReference>
<dbReference type="PANTHER" id="PTHR24418">
    <property type="entry name" value="TYROSINE-PROTEIN KINASE"/>
    <property type="match status" value="1"/>
</dbReference>
<dbReference type="Pfam" id="PF07714">
    <property type="entry name" value="PK_Tyr_Ser-Thr"/>
    <property type="match status" value="1"/>
</dbReference>
<dbReference type="Pfam" id="PF00017">
    <property type="entry name" value="SH2"/>
    <property type="match status" value="1"/>
</dbReference>
<dbReference type="Pfam" id="PF00018">
    <property type="entry name" value="SH3_1"/>
    <property type="match status" value="1"/>
</dbReference>
<dbReference type="PRINTS" id="PR00401">
    <property type="entry name" value="SH2DOMAIN"/>
</dbReference>
<dbReference type="PRINTS" id="PR00452">
    <property type="entry name" value="SH3DOMAIN"/>
</dbReference>
<dbReference type="PRINTS" id="PR00109">
    <property type="entry name" value="TYRKINASE"/>
</dbReference>
<dbReference type="SMART" id="SM00252">
    <property type="entry name" value="SH2"/>
    <property type="match status" value="1"/>
</dbReference>
<dbReference type="SMART" id="SM00326">
    <property type="entry name" value="SH3"/>
    <property type="match status" value="1"/>
</dbReference>
<dbReference type="SMART" id="SM00219">
    <property type="entry name" value="TyrKc"/>
    <property type="match status" value="1"/>
</dbReference>
<dbReference type="SUPFAM" id="SSF56112">
    <property type="entry name" value="Protein kinase-like (PK-like)"/>
    <property type="match status" value="1"/>
</dbReference>
<dbReference type="SUPFAM" id="SSF55550">
    <property type="entry name" value="SH2 domain"/>
    <property type="match status" value="1"/>
</dbReference>
<dbReference type="SUPFAM" id="SSF50044">
    <property type="entry name" value="SH3-domain"/>
    <property type="match status" value="1"/>
</dbReference>
<dbReference type="PROSITE" id="PS00107">
    <property type="entry name" value="PROTEIN_KINASE_ATP"/>
    <property type="match status" value="1"/>
</dbReference>
<dbReference type="PROSITE" id="PS50011">
    <property type="entry name" value="PROTEIN_KINASE_DOM"/>
    <property type="match status" value="1"/>
</dbReference>
<dbReference type="PROSITE" id="PS00109">
    <property type="entry name" value="PROTEIN_KINASE_TYR"/>
    <property type="match status" value="1"/>
</dbReference>
<dbReference type="PROSITE" id="PS50001">
    <property type="entry name" value="SH2"/>
    <property type="match status" value="1"/>
</dbReference>
<dbReference type="PROSITE" id="PS50002">
    <property type="entry name" value="SH3"/>
    <property type="match status" value="1"/>
</dbReference>
<sequence>MGCVHCKEKISGKGQGGSGTGTPAHPPSQYDPDPTQLSGAFTHIPDFNNFHAAAVSPPVPFSGPGFYPCNTLQAHSSITGGGVTLFIALYDYEARTEDDLSFQKGEKFHIINNTEGDWWEARSLSSGATGYIPSNYVAPVDSIQAEEWYFGKIGRKDAERQLLCHGNCRGTFLIRESETTKGAYSLSIRDWDEAKGDHVKHYKIRKLDSGGYYITTRAQFDTIQQLVQHYIERAAGLCCRLAVPCPKGTPKLADLSVKTKDVWEIPRESLQLLQKLGNGQFGEVWMGTWNGTTKVAVKTLKPGTMSPEAFLEEAQIMKRLRHDKLVQLYAVVSEEPIYIVTEFMSQGSLLDFLKDGDGRYLKLPQLVDMAAQIAAGMAYIERMNYIHRDLRAANILVGDNLVCKIADFGLARLIEDNEYTARQGAKFPIKWTAPEAALFGKFTIKSDVWSFGILLTELVTKGRVPYPGMNNREVLEQVERGYRMQCPGGCPPSLHDVMVQCWKREPEERPTFEYLQSFLEDYFTATEPQYQPGDNQ</sequence>
<protein>
    <recommendedName>
        <fullName>Proto-oncogene tyrosine-protein kinase Yrk</fullName>
        <ecNumber>2.7.10.2</ecNumber>
    </recommendedName>
    <alternativeName>
        <fullName>Yes-related kinase</fullName>
    </alternativeName>
    <alternativeName>
        <fullName>p60-Yrk</fullName>
    </alternativeName>
</protein>
<evidence type="ECO:0000250" key="1"/>
<evidence type="ECO:0000255" key="2">
    <source>
        <dbReference type="PROSITE-ProRule" id="PRU00159"/>
    </source>
</evidence>
<evidence type="ECO:0000255" key="3">
    <source>
        <dbReference type="PROSITE-ProRule" id="PRU00191"/>
    </source>
</evidence>
<evidence type="ECO:0000255" key="4">
    <source>
        <dbReference type="PROSITE-ProRule" id="PRU00192"/>
    </source>
</evidence>
<evidence type="ECO:0000255" key="5">
    <source>
        <dbReference type="PROSITE-ProRule" id="PRU10028"/>
    </source>
</evidence>
<evidence type="ECO:0000256" key="6">
    <source>
        <dbReference type="SAM" id="MobiDB-lite"/>
    </source>
</evidence>
<gene>
    <name type="primary">YRK</name>
</gene>
<reference key="1">
    <citation type="journal article" date="1993" name="Oncogene">
        <title>A novel Yes-related kinase, Yrk, is expressed at elevated levels in neural and hematopoietic tissues.</title>
        <authorList>
            <person name="Sudol M."/>
            <person name="Greulich H."/>
            <person name="Newman L."/>
            <person name="Sarkar A."/>
            <person name="Sukegawa J."/>
            <person name="Yamamoto T."/>
        </authorList>
    </citation>
    <scope>NUCLEOTIDE SEQUENCE [MRNA]</scope>
    <source>
        <strain>White leghorn</strain>
        <tissue>Brain</tissue>
        <tissue>Kidney</tissue>
    </source>
</reference>
<feature type="initiator methionine" description="Removed" evidence="1">
    <location>
        <position position="1"/>
    </location>
</feature>
<feature type="chain" id="PRO_0000088188" description="Proto-oncogene tyrosine-protein kinase Yrk">
    <location>
        <begin position="2"/>
        <end position="536"/>
    </location>
</feature>
<feature type="domain" description="SH3" evidence="4">
    <location>
        <begin position="81"/>
        <end position="142"/>
    </location>
</feature>
<feature type="domain" description="SH2" evidence="3">
    <location>
        <begin position="148"/>
        <end position="245"/>
    </location>
</feature>
<feature type="domain" description="Protein kinase" evidence="2">
    <location>
        <begin position="270"/>
        <end position="523"/>
    </location>
</feature>
<feature type="region of interest" description="Disordered" evidence="6">
    <location>
        <begin position="10"/>
        <end position="36"/>
    </location>
</feature>
<feature type="active site" description="Proton acceptor" evidence="2 5">
    <location>
        <position position="389"/>
    </location>
</feature>
<feature type="binding site" evidence="2">
    <location>
        <begin position="276"/>
        <end position="284"/>
    </location>
    <ligand>
        <name>ATP</name>
        <dbReference type="ChEBI" id="CHEBI:30616"/>
    </ligand>
</feature>
<feature type="binding site" evidence="2">
    <location>
        <position position="298"/>
    </location>
    <ligand>
        <name>ATP</name>
        <dbReference type="ChEBI" id="CHEBI:30616"/>
    </ligand>
</feature>
<feature type="modified residue" description="Phosphotyrosine; by autocatalysis" evidence="1">
    <location>
        <position position="419"/>
    </location>
</feature>
<feature type="modified residue" description="Phosphotyrosine" evidence="1">
    <location>
        <position position="530"/>
    </location>
</feature>
<feature type="lipid moiety-binding region" description="N-myristoyl glycine" evidence="1">
    <location>
        <position position="2"/>
    </location>
</feature>
<feature type="lipid moiety-binding region" description="S-palmitoyl cysteine" evidence="1">
    <location>
        <position position="3"/>
    </location>
</feature>
<feature type="lipid moiety-binding region" description="S-palmitoyl cysteine" evidence="1">
    <location>
        <position position="6"/>
    </location>
</feature>
<keyword id="KW-0067">ATP-binding</keyword>
<keyword id="KW-0418">Kinase</keyword>
<keyword id="KW-0449">Lipoprotein</keyword>
<keyword id="KW-0519">Myristate</keyword>
<keyword id="KW-0547">Nucleotide-binding</keyword>
<keyword id="KW-0564">Palmitate</keyword>
<keyword id="KW-0597">Phosphoprotein</keyword>
<keyword id="KW-0656">Proto-oncogene</keyword>
<keyword id="KW-1185">Reference proteome</keyword>
<keyword id="KW-0727">SH2 domain</keyword>
<keyword id="KW-0728">SH3 domain</keyword>
<keyword id="KW-0808">Transferase</keyword>
<keyword id="KW-0829">Tyrosine-protein kinase</keyword>
<accession>Q02977</accession>
<comment type="function">
    <text>May participate in signaling pathways.</text>
</comment>
<comment type="catalytic activity">
    <reaction evidence="5">
        <text>L-tyrosyl-[protein] + ATP = O-phospho-L-tyrosyl-[protein] + ADP + H(+)</text>
        <dbReference type="Rhea" id="RHEA:10596"/>
        <dbReference type="Rhea" id="RHEA-COMP:10136"/>
        <dbReference type="Rhea" id="RHEA-COMP:20101"/>
        <dbReference type="ChEBI" id="CHEBI:15378"/>
        <dbReference type="ChEBI" id="CHEBI:30616"/>
        <dbReference type="ChEBI" id="CHEBI:46858"/>
        <dbReference type="ChEBI" id="CHEBI:61978"/>
        <dbReference type="ChEBI" id="CHEBI:456216"/>
        <dbReference type="EC" id="2.7.10.2"/>
    </reaction>
</comment>
<comment type="tissue specificity">
    <text>There are elevated levels of this protein in neural and hematopoietic tissues.</text>
</comment>
<comment type="PTM">
    <text>Phosphorylated.</text>
</comment>
<comment type="similarity">
    <text evidence="2">Belongs to the protein kinase superfamily. Tyr protein kinase family. SRC subfamily.</text>
</comment>
<name>YRK_CHICK</name>
<organism>
    <name type="scientific">Gallus gallus</name>
    <name type="common">Chicken</name>
    <dbReference type="NCBI Taxonomy" id="9031"/>
    <lineage>
        <taxon>Eukaryota</taxon>
        <taxon>Metazoa</taxon>
        <taxon>Chordata</taxon>
        <taxon>Craniata</taxon>
        <taxon>Vertebrata</taxon>
        <taxon>Euteleostomi</taxon>
        <taxon>Archelosauria</taxon>
        <taxon>Archosauria</taxon>
        <taxon>Dinosauria</taxon>
        <taxon>Saurischia</taxon>
        <taxon>Theropoda</taxon>
        <taxon>Coelurosauria</taxon>
        <taxon>Aves</taxon>
        <taxon>Neognathae</taxon>
        <taxon>Galloanserae</taxon>
        <taxon>Galliformes</taxon>
        <taxon>Phasianidae</taxon>
        <taxon>Phasianinae</taxon>
        <taxon>Gallus</taxon>
    </lineage>
</organism>